<gene>
    <name type="primary">SLC14A1</name>
</gene>
<reference key="1">
    <citation type="submission" date="2009-05" db="EMBL/GenBank/DDBJ databases">
        <title>Urea transport in ovine forestomachs.</title>
        <authorList>
            <person name="Deiner C."/>
            <person name="Martens H."/>
            <person name="Lu Z."/>
            <person name="Kolisek M."/>
        </authorList>
    </citation>
    <scope>NUCLEOTIDE SEQUENCE [MRNA]</scope>
    <source>
        <tissue>Ruminal epithelium</tissue>
    </source>
</reference>
<name>UT1_SHEEP</name>
<protein>
    <recommendedName>
        <fullName>Urea transporter 1</fullName>
    </recommendedName>
    <alternativeName>
        <fullName>Solute carrier family 14 member 1</fullName>
    </alternativeName>
    <alternativeName>
        <fullName>Urea transporter B</fullName>
        <shortName>UT-B</shortName>
    </alternativeName>
    <alternativeName>
        <fullName>Urea transporter, erythrocyte</fullName>
    </alternativeName>
</protein>
<proteinExistence type="evidence at transcript level"/>
<organism>
    <name type="scientific">Ovis aries</name>
    <name type="common">Sheep</name>
    <dbReference type="NCBI Taxonomy" id="9940"/>
    <lineage>
        <taxon>Eukaryota</taxon>
        <taxon>Metazoa</taxon>
        <taxon>Chordata</taxon>
        <taxon>Craniata</taxon>
        <taxon>Vertebrata</taxon>
        <taxon>Euteleostomi</taxon>
        <taxon>Mammalia</taxon>
        <taxon>Eutheria</taxon>
        <taxon>Laurasiatheria</taxon>
        <taxon>Artiodactyla</taxon>
        <taxon>Ruminantia</taxon>
        <taxon>Pecora</taxon>
        <taxon>Bovidae</taxon>
        <taxon>Caprinae</taxon>
        <taxon>Ovis</taxon>
    </lineage>
</organism>
<sequence length="384" mass="41499">MDDNPTAVKLDQGGNQAPQGQGRRRLPKALGYITGDMKEFANWLKDKPQALQFVDWVLRGISQVVFVSNPISGILILVGLLVQNPWCALNGCVGTVVSTLTALLLNQDRSAITAGLQGYNATLVGILMAIYSDKGNYFWWLLFPVSAMSMTCPIFSSALNSVLSKWDLPVFTLPFNMALSMYLSATGHFNPFFPSTLVTPVTSVPNVTWPDLSALQLLKSLPVGVGQIYGCDNPWAGGIFLGAILLSSPLMCLHAAIGSLLGIIAGLSLSAPFENIYAGLWGFNSSLACIAIGGMFMALTWQTHLLALACALFTAYLGASMSHVMAVVGLPSCTWPFCLATLLFLLLTTKNPNIYKMPISKVTYPEENRIFYLQSTKRTVQGPL</sequence>
<dbReference type="EMBL" id="GQ118969">
    <property type="protein sequence ID" value="ACR78174.1"/>
    <property type="molecule type" value="mRNA"/>
</dbReference>
<dbReference type="RefSeq" id="NP_001156526.1">
    <property type="nucleotide sequence ID" value="NM_001163054.1"/>
</dbReference>
<dbReference type="RefSeq" id="XP_011958624.1">
    <property type="nucleotide sequence ID" value="XM_012103234.4"/>
</dbReference>
<dbReference type="SMR" id="C5MK33"/>
<dbReference type="STRING" id="9940.ENSOARP00000002545"/>
<dbReference type="GlyCosmos" id="C5MK33">
    <property type="glycosylation" value="1 site, No reported glycans"/>
</dbReference>
<dbReference type="PaxDb" id="9940-ENSOARP00000002545"/>
<dbReference type="Ensembl" id="ENSOART00020053405">
    <property type="protein sequence ID" value="ENSOARP00020037276"/>
    <property type="gene ID" value="ENSOARG00020024788"/>
</dbReference>
<dbReference type="Ensembl" id="ENSOART00025029404">
    <property type="protein sequence ID" value="ENSOARP00025014376"/>
    <property type="gene ID" value="ENSOARG00025017908"/>
</dbReference>
<dbReference type="Ensembl" id="ENSOART00180046811">
    <property type="protein sequence ID" value="ENSOARP00180023657"/>
    <property type="gene ID" value="ENSOARG00180028419"/>
</dbReference>
<dbReference type="Ensembl" id="ENSOART00185040977">
    <property type="protein sequence ID" value="ENSOARP00185020232"/>
    <property type="gene ID" value="ENSOARG00185024890"/>
</dbReference>
<dbReference type="Ensembl" id="ENSOART00215058363">
    <property type="protein sequence ID" value="ENSOARP00215030842"/>
    <property type="gene ID" value="ENSOARG00215034790"/>
</dbReference>
<dbReference type="Ensembl" id="ENSOART00220049544">
    <property type="protein sequence ID" value="ENSOARP00220026606"/>
    <property type="gene ID" value="ENSOARG00220029728"/>
</dbReference>
<dbReference type="Ensembl" id="ENSOART00225062326">
    <property type="protein sequence ID" value="ENSOARP00225031272"/>
    <property type="gene ID" value="ENSOARG00225037672"/>
</dbReference>
<dbReference type="Ensembl" id="ENSOART00260047860">
    <property type="protein sequence ID" value="ENSOARP00260024117"/>
    <property type="gene ID" value="ENSOARG00260029198"/>
</dbReference>
<dbReference type="GeneID" id="100302356"/>
<dbReference type="KEGG" id="oas:100302356"/>
<dbReference type="CTD" id="6563"/>
<dbReference type="eggNOG" id="ENOG502S2GD">
    <property type="taxonomic scope" value="Eukaryota"/>
</dbReference>
<dbReference type="OrthoDB" id="426293at2759"/>
<dbReference type="Proteomes" id="UP000002356">
    <property type="component" value="Unplaced"/>
</dbReference>
<dbReference type="GO" id="GO:0016323">
    <property type="term" value="C:basolateral plasma membrane"/>
    <property type="evidence" value="ECO:0000250"/>
    <property type="project" value="UniProtKB"/>
</dbReference>
<dbReference type="GO" id="GO:0005886">
    <property type="term" value="C:plasma membrane"/>
    <property type="evidence" value="ECO:0000250"/>
    <property type="project" value="UniProtKB"/>
</dbReference>
<dbReference type="GO" id="GO:0015265">
    <property type="term" value="F:urea channel activity"/>
    <property type="evidence" value="ECO:0000250"/>
    <property type="project" value="UniProtKB"/>
</dbReference>
<dbReference type="GO" id="GO:0015204">
    <property type="term" value="F:urea transmembrane transporter activity"/>
    <property type="evidence" value="ECO:0000250"/>
    <property type="project" value="UniProtKB"/>
</dbReference>
<dbReference type="GO" id="GO:0071918">
    <property type="term" value="P:urea transmembrane transport"/>
    <property type="evidence" value="ECO:0000250"/>
    <property type="project" value="UniProtKB"/>
</dbReference>
<dbReference type="FunFam" id="1.10.3430.10:FF:000002">
    <property type="entry name" value="urea transporter 2"/>
    <property type="match status" value="1"/>
</dbReference>
<dbReference type="Gene3D" id="1.10.3430.10">
    <property type="entry name" value="Ammonium transporter AmtB like domains"/>
    <property type="match status" value="1"/>
</dbReference>
<dbReference type="InterPro" id="IPR029020">
    <property type="entry name" value="Ammonium/urea_transptr"/>
</dbReference>
<dbReference type="InterPro" id="IPR004937">
    <property type="entry name" value="Urea_transporter"/>
</dbReference>
<dbReference type="PANTHER" id="PTHR10464">
    <property type="entry name" value="UREA TRANSPORTER"/>
    <property type="match status" value="1"/>
</dbReference>
<dbReference type="PANTHER" id="PTHR10464:SF5">
    <property type="entry name" value="UREA TRANSPORTER 1"/>
    <property type="match status" value="1"/>
</dbReference>
<dbReference type="Pfam" id="PF03253">
    <property type="entry name" value="UT"/>
    <property type="match status" value="1"/>
</dbReference>
<dbReference type="PIRSF" id="PIRSF016502">
    <property type="entry name" value="Urea_transporter"/>
    <property type="match status" value="1"/>
</dbReference>
<accession>C5MK33</accession>
<keyword id="KW-1003">Cell membrane</keyword>
<keyword id="KW-0325">Glycoprotein</keyword>
<keyword id="KW-0472">Membrane</keyword>
<keyword id="KW-1185">Reference proteome</keyword>
<keyword id="KW-0812">Transmembrane</keyword>
<keyword id="KW-1133">Transmembrane helix</keyword>
<keyword id="KW-0813">Transport</keyword>
<comment type="function">
    <text evidence="3">Mediates the transport of urea driven by a concentration gradient across the cell membranes of erythrocytes and the renal inner medullary collecting duct which is critical to the urinary concentrating mechanism (By similarity). Facilitates water transport in erythrocytes (By similarity).</text>
</comment>
<comment type="catalytic activity">
    <reaction evidence="1">
        <text>urea(in) = urea(out)</text>
        <dbReference type="Rhea" id="RHEA:32799"/>
        <dbReference type="ChEBI" id="CHEBI:16199"/>
    </reaction>
</comment>
<comment type="subunit">
    <text evidence="1 2">Homotrimer; each subunit contains a pore through which urea permeates (By similarity). Identified in a complex with STOM (By similarity).</text>
</comment>
<comment type="subcellular location">
    <subcellularLocation>
        <location evidence="3">Cell membrane</location>
        <topology evidence="4">Multi-pass membrane protein</topology>
    </subcellularLocation>
    <subcellularLocation>
        <location evidence="3">Basolateral cell membrane</location>
        <topology evidence="4">Multi-pass membrane protein</topology>
    </subcellularLocation>
    <text evidence="3">Restricted to the basolateral membrane in various portions of the urothelium.</text>
</comment>
<comment type="similarity">
    <text evidence="6">Belongs to the urea transporter family.</text>
</comment>
<feature type="chain" id="PRO_0000410965" description="Urea transporter 1">
    <location>
        <begin position="1"/>
        <end position="384"/>
    </location>
</feature>
<feature type="transmembrane region" description="Helical" evidence="4">
    <location>
        <begin position="61"/>
        <end position="81"/>
    </location>
</feature>
<feature type="transmembrane region" description="Helical" evidence="4">
    <location>
        <begin position="85"/>
        <end position="105"/>
    </location>
</feature>
<feature type="transmembrane region" description="Helical" evidence="4">
    <location>
        <begin position="111"/>
        <end position="131"/>
    </location>
</feature>
<feature type="transmembrane region" description="Helical" evidence="4">
    <location>
        <begin position="138"/>
        <end position="158"/>
    </location>
</feature>
<feature type="transmembrane region" description="Helical" evidence="4">
    <location>
        <begin position="169"/>
        <end position="189"/>
    </location>
</feature>
<feature type="transmembrane region" description="Helical" evidence="4">
    <location>
        <begin position="237"/>
        <end position="257"/>
    </location>
</feature>
<feature type="transmembrane region" description="Helical" evidence="4">
    <location>
        <begin position="279"/>
        <end position="299"/>
    </location>
</feature>
<feature type="transmembrane region" description="Helical" evidence="4">
    <location>
        <begin position="327"/>
        <end position="347"/>
    </location>
</feature>
<feature type="region of interest" description="Disordered" evidence="5">
    <location>
        <begin position="1"/>
        <end position="23"/>
    </location>
</feature>
<feature type="site" description="Important for channel permeability" evidence="2">
    <location>
        <position position="334"/>
    </location>
</feature>
<feature type="glycosylation site" description="N-linked (GlcNAc...) asparagine" evidence="4">
    <location>
        <position position="206"/>
    </location>
</feature>
<evidence type="ECO:0000250" key="1">
    <source>
        <dbReference type="UniProtKB" id="Q13336"/>
    </source>
</evidence>
<evidence type="ECO:0000250" key="2">
    <source>
        <dbReference type="UniProtKB" id="Q5QF96"/>
    </source>
</evidence>
<evidence type="ECO:0000250" key="3">
    <source>
        <dbReference type="UniProtKB" id="Q8VHL0"/>
    </source>
</evidence>
<evidence type="ECO:0000255" key="4"/>
<evidence type="ECO:0000256" key="5">
    <source>
        <dbReference type="SAM" id="MobiDB-lite"/>
    </source>
</evidence>
<evidence type="ECO:0000305" key="6"/>